<name>CYSG_AZOVD</name>
<feature type="chain" id="PRO_1000215844" description="Siroheme synthase">
    <location>
        <begin position="1"/>
        <end position="464"/>
    </location>
</feature>
<feature type="region of interest" description="Precorrin-2 dehydrogenase /sirohydrochlorin ferrochelatase" evidence="1">
    <location>
        <begin position="1"/>
        <end position="203"/>
    </location>
</feature>
<feature type="region of interest" description="Uroporphyrinogen-III C-methyltransferase" evidence="1">
    <location>
        <begin position="216"/>
        <end position="464"/>
    </location>
</feature>
<feature type="active site" description="Proton acceptor" evidence="1">
    <location>
        <position position="248"/>
    </location>
</feature>
<feature type="active site" description="Proton donor" evidence="1">
    <location>
        <position position="270"/>
    </location>
</feature>
<feature type="binding site" evidence="1">
    <location>
        <begin position="22"/>
        <end position="23"/>
    </location>
    <ligand>
        <name>NAD(+)</name>
        <dbReference type="ChEBI" id="CHEBI:57540"/>
    </ligand>
</feature>
<feature type="binding site" evidence="1">
    <location>
        <begin position="43"/>
        <end position="44"/>
    </location>
    <ligand>
        <name>NAD(+)</name>
        <dbReference type="ChEBI" id="CHEBI:57540"/>
    </ligand>
</feature>
<feature type="binding site" evidence="1">
    <location>
        <position position="225"/>
    </location>
    <ligand>
        <name>S-adenosyl-L-methionine</name>
        <dbReference type="ChEBI" id="CHEBI:59789"/>
    </ligand>
</feature>
<feature type="binding site" evidence="1">
    <location>
        <begin position="301"/>
        <end position="303"/>
    </location>
    <ligand>
        <name>S-adenosyl-L-methionine</name>
        <dbReference type="ChEBI" id="CHEBI:59789"/>
    </ligand>
</feature>
<feature type="binding site" evidence="1">
    <location>
        <position position="306"/>
    </location>
    <ligand>
        <name>S-adenosyl-L-methionine</name>
        <dbReference type="ChEBI" id="CHEBI:59789"/>
    </ligand>
</feature>
<feature type="binding site" evidence="1">
    <location>
        <begin position="331"/>
        <end position="332"/>
    </location>
    <ligand>
        <name>S-adenosyl-L-methionine</name>
        <dbReference type="ChEBI" id="CHEBI:59789"/>
    </ligand>
</feature>
<feature type="binding site" evidence="1">
    <location>
        <position position="383"/>
    </location>
    <ligand>
        <name>S-adenosyl-L-methionine</name>
        <dbReference type="ChEBI" id="CHEBI:59789"/>
    </ligand>
</feature>
<feature type="binding site" evidence="1">
    <location>
        <position position="412"/>
    </location>
    <ligand>
        <name>S-adenosyl-L-methionine</name>
        <dbReference type="ChEBI" id="CHEBI:59789"/>
    </ligand>
</feature>
<feature type="modified residue" description="Phosphoserine" evidence="1">
    <location>
        <position position="128"/>
    </location>
</feature>
<protein>
    <recommendedName>
        <fullName evidence="1">Siroheme synthase</fullName>
    </recommendedName>
    <domain>
        <recommendedName>
            <fullName evidence="1">Uroporphyrinogen-III C-methyltransferase</fullName>
            <shortName evidence="1">Urogen III methylase</shortName>
            <ecNumber evidence="1">2.1.1.107</ecNumber>
        </recommendedName>
        <alternativeName>
            <fullName evidence="1">SUMT</fullName>
        </alternativeName>
        <alternativeName>
            <fullName evidence="1">Uroporphyrinogen III methylase</fullName>
            <shortName evidence="1">UROM</shortName>
        </alternativeName>
    </domain>
    <domain>
        <recommendedName>
            <fullName evidence="1">Precorrin-2 dehydrogenase</fullName>
            <ecNumber evidence="1">1.3.1.76</ecNumber>
        </recommendedName>
    </domain>
    <domain>
        <recommendedName>
            <fullName evidence="1">Sirohydrochlorin ferrochelatase</fullName>
            <ecNumber evidence="1">4.99.1.4</ecNumber>
        </recommendedName>
    </domain>
</protein>
<gene>
    <name evidence="1" type="primary">cysG</name>
    <name type="ordered locus">Avin_28170</name>
</gene>
<reference key="1">
    <citation type="journal article" date="2009" name="J. Bacteriol.">
        <title>Genome sequence of Azotobacter vinelandii, an obligate aerobe specialized to support diverse anaerobic metabolic processes.</title>
        <authorList>
            <person name="Setubal J.C."/>
            <person name="Dos Santos P."/>
            <person name="Goldman B.S."/>
            <person name="Ertesvaag H."/>
            <person name="Espin G."/>
            <person name="Rubio L.M."/>
            <person name="Valla S."/>
            <person name="Almeida N.F."/>
            <person name="Balasubramanian D."/>
            <person name="Cromes L."/>
            <person name="Curatti L."/>
            <person name="Du Z."/>
            <person name="Godsy E."/>
            <person name="Goodner B."/>
            <person name="Hellner-Burris K."/>
            <person name="Hernandez J.A."/>
            <person name="Houmiel K."/>
            <person name="Imperial J."/>
            <person name="Kennedy C."/>
            <person name="Larson T.J."/>
            <person name="Latreille P."/>
            <person name="Ligon L.S."/>
            <person name="Lu J."/>
            <person name="Maerk M."/>
            <person name="Miller N.M."/>
            <person name="Norton S."/>
            <person name="O'Carroll I.P."/>
            <person name="Paulsen I."/>
            <person name="Raulfs E.C."/>
            <person name="Roemer R."/>
            <person name="Rosser J."/>
            <person name="Segura D."/>
            <person name="Slater S."/>
            <person name="Stricklin S.L."/>
            <person name="Studholme D.J."/>
            <person name="Sun J."/>
            <person name="Viana C.J."/>
            <person name="Wallin E."/>
            <person name="Wang B."/>
            <person name="Wheeler C."/>
            <person name="Zhu H."/>
            <person name="Dean D.R."/>
            <person name="Dixon R."/>
            <person name="Wood D."/>
        </authorList>
    </citation>
    <scope>NUCLEOTIDE SEQUENCE [LARGE SCALE GENOMIC DNA]</scope>
    <source>
        <strain>DJ / ATCC BAA-1303</strain>
    </source>
</reference>
<organism>
    <name type="scientific">Azotobacter vinelandii (strain DJ / ATCC BAA-1303)</name>
    <dbReference type="NCBI Taxonomy" id="322710"/>
    <lineage>
        <taxon>Bacteria</taxon>
        <taxon>Pseudomonadati</taxon>
        <taxon>Pseudomonadota</taxon>
        <taxon>Gammaproteobacteria</taxon>
        <taxon>Pseudomonadales</taxon>
        <taxon>Pseudomonadaceae</taxon>
        <taxon>Azotobacter</taxon>
    </lineage>
</organism>
<comment type="function">
    <text evidence="1">Multifunctional enzyme that catalyzes the SAM-dependent methylations of uroporphyrinogen III at position C-2 and C-7 to form precorrin-2 via precorrin-1. Then it catalyzes the NAD-dependent ring dehydrogenation of precorrin-2 to yield sirohydrochlorin. Finally, it catalyzes the ferrochelation of sirohydrochlorin to yield siroheme.</text>
</comment>
<comment type="catalytic activity">
    <reaction evidence="1">
        <text>uroporphyrinogen III + 2 S-adenosyl-L-methionine = precorrin-2 + 2 S-adenosyl-L-homocysteine + H(+)</text>
        <dbReference type="Rhea" id="RHEA:32459"/>
        <dbReference type="ChEBI" id="CHEBI:15378"/>
        <dbReference type="ChEBI" id="CHEBI:57308"/>
        <dbReference type="ChEBI" id="CHEBI:57856"/>
        <dbReference type="ChEBI" id="CHEBI:58827"/>
        <dbReference type="ChEBI" id="CHEBI:59789"/>
        <dbReference type="EC" id="2.1.1.107"/>
    </reaction>
</comment>
<comment type="catalytic activity">
    <reaction evidence="1">
        <text>precorrin-2 + NAD(+) = sirohydrochlorin + NADH + 2 H(+)</text>
        <dbReference type="Rhea" id="RHEA:15613"/>
        <dbReference type="ChEBI" id="CHEBI:15378"/>
        <dbReference type="ChEBI" id="CHEBI:57540"/>
        <dbReference type="ChEBI" id="CHEBI:57945"/>
        <dbReference type="ChEBI" id="CHEBI:58351"/>
        <dbReference type="ChEBI" id="CHEBI:58827"/>
        <dbReference type="EC" id="1.3.1.76"/>
    </reaction>
</comment>
<comment type="catalytic activity">
    <reaction evidence="1">
        <text>siroheme + 2 H(+) = sirohydrochlorin + Fe(2+)</text>
        <dbReference type="Rhea" id="RHEA:24360"/>
        <dbReference type="ChEBI" id="CHEBI:15378"/>
        <dbReference type="ChEBI" id="CHEBI:29033"/>
        <dbReference type="ChEBI" id="CHEBI:58351"/>
        <dbReference type="ChEBI" id="CHEBI:60052"/>
        <dbReference type="EC" id="4.99.1.4"/>
    </reaction>
</comment>
<comment type="pathway">
    <text evidence="1">Cofactor biosynthesis; adenosylcobalamin biosynthesis; precorrin-2 from uroporphyrinogen III: step 1/1.</text>
</comment>
<comment type="pathway">
    <text evidence="1">Cofactor biosynthesis; adenosylcobalamin biosynthesis; sirohydrochlorin from precorrin-2: step 1/1.</text>
</comment>
<comment type="pathway">
    <text evidence="1">Porphyrin-containing compound metabolism; siroheme biosynthesis; precorrin-2 from uroporphyrinogen III: step 1/1.</text>
</comment>
<comment type="pathway">
    <text evidence="1">Porphyrin-containing compound metabolism; siroheme biosynthesis; siroheme from sirohydrochlorin: step 1/1.</text>
</comment>
<comment type="pathway">
    <text evidence="1">Porphyrin-containing compound metabolism; siroheme biosynthesis; sirohydrochlorin from precorrin-2: step 1/1.</text>
</comment>
<comment type="similarity">
    <text evidence="1">In the N-terminal section; belongs to the precorrin-2 dehydrogenase / sirohydrochlorin ferrochelatase family.</text>
</comment>
<comment type="similarity">
    <text evidence="1">In the C-terminal section; belongs to the precorrin methyltransferase family.</text>
</comment>
<sequence>MDYLPLFHNLKGRRVLLVGGGEIALRKARLLADAGAVLRVVAPQIEAALAEQVREGGGDCLPRGYAQGDLDGCVLAIAATDDPLLNARVSRDAHEHGVPVNVVDSPELCSVIFPAIVDRSPLLVAVSSGGDAPVLARLMRARIETWIPAGYGRLAGLARRFRAQVKRLLPDVRQRRVFWEEVFQGPIAERLLSGQETEAERLLEAKLAGAAPKALGEVYLVGAGPGDPDLLTFRALRLMQQADVVLYDRLVAPAIVELCRRDAERIYVGKRRAEHALPQEQINRLLVRLAGEGKRVLRLKGGDPFIFGRGGEEIEELAAHGIPFQVVPGITAASGCAAYAGIPLTHRDHAQSVRFVTGHLKDGSFDLPWADLVAPAQTLVVYMGLVGLPVICQRLIEHGRAAATPVALIQQGTTPQQRVIVSTLAELPARVEREQVSAPTLLIVGEVVRLRDKLAWFEGRQSAD</sequence>
<evidence type="ECO:0000255" key="1">
    <source>
        <dbReference type="HAMAP-Rule" id="MF_01646"/>
    </source>
</evidence>
<accession>C1DKY7</accession>
<keyword id="KW-0169">Cobalamin biosynthesis</keyword>
<keyword id="KW-0456">Lyase</keyword>
<keyword id="KW-0489">Methyltransferase</keyword>
<keyword id="KW-0511">Multifunctional enzyme</keyword>
<keyword id="KW-0520">NAD</keyword>
<keyword id="KW-0560">Oxidoreductase</keyword>
<keyword id="KW-0597">Phosphoprotein</keyword>
<keyword id="KW-0627">Porphyrin biosynthesis</keyword>
<keyword id="KW-0949">S-adenosyl-L-methionine</keyword>
<keyword id="KW-0808">Transferase</keyword>
<dbReference type="EC" id="2.1.1.107" evidence="1"/>
<dbReference type="EC" id="1.3.1.76" evidence="1"/>
<dbReference type="EC" id="4.99.1.4" evidence="1"/>
<dbReference type="EMBL" id="CP001157">
    <property type="protein sequence ID" value="ACO78989.1"/>
    <property type="molecule type" value="Genomic_DNA"/>
</dbReference>
<dbReference type="RefSeq" id="WP_012701377.1">
    <property type="nucleotide sequence ID" value="NC_012560.1"/>
</dbReference>
<dbReference type="SMR" id="C1DKY7"/>
<dbReference type="STRING" id="322710.Avin_28170"/>
<dbReference type="EnsemblBacteria" id="ACO78989">
    <property type="protein sequence ID" value="ACO78989"/>
    <property type="gene ID" value="Avin_28170"/>
</dbReference>
<dbReference type="GeneID" id="88185935"/>
<dbReference type="KEGG" id="avn:Avin_28170"/>
<dbReference type="eggNOG" id="COG0007">
    <property type="taxonomic scope" value="Bacteria"/>
</dbReference>
<dbReference type="eggNOG" id="COG1648">
    <property type="taxonomic scope" value="Bacteria"/>
</dbReference>
<dbReference type="HOGENOM" id="CLU_011276_2_1_6"/>
<dbReference type="OrthoDB" id="9815856at2"/>
<dbReference type="UniPathway" id="UPA00148">
    <property type="reaction ID" value="UER00211"/>
</dbReference>
<dbReference type="UniPathway" id="UPA00148">
    <property type="reaction ID" value="UER00222"/>
</dbReference>
<dbReference type="UniPathway" id="UPA00262">
    <property type="reaction ID" value="UER00211"/>
</dbReference>
<dbReference type="UniPathway" id="UPA00262">
    <property type="reaction ID" value="UER00222"/>
</dbReference>
<dbReference type="UniPathway" id="UPA00262">
    <property type="reaction ID" value="UER00376"/>
</dbReference>
<dbReference type="Proteomes" id="UP000002424">
    <property type="component" value="Chromosome"/>
</dbReference>
<dbReference type="GO" id="GO:0051287">
    <property type="term" value="F:NAD binding"/>
    <property type="evidence" value="ECO:0007669"/>
    <property type="project" value="InterPro"/>
</dbReference>
<dbReference type="GO" id="GO:0043115">
    <property type="term" value="F:precorrin-2 dehydrogenase activity"/>
    <property type="evidence" value="ECO:0007669"/>
    <property type="project" value="UniProtKB-UniRule"/>
</dbReference>
<dbReference type="GO" id="GO:0051266">
    <property type="term" value="F:sirohydrochlorin ferrochelatase activity"/>
    <property type="evidence" value="ECO:0007669"/>
    <property type="project" value="UniProtKB-EC"/>
</dbReference>
<dbReference type="GO" id="GO:0004851">
    <property type="term" value="F:uroporphyrin-III C-methyltransferase activity"/>
    <property type="evidence" value="ECO:0007669"/>
    <property type="project" value="UniProtKB-UniRule"/>
</dbReference>
<dbReference type="GO" id="GO:0009236">
    <property type="term" value="P:cobalamin biosynthetic process"/>
    <property type="evidence" value="ECO:0007669"/>
    <property type="project" value="UniProtKB-UniRule"/>
</dbReference>
<dbReference type="GO" id="GO:0032259">
    <property type="term" value="P:methylation"/>
    <property type="evidence" value="ECO:0007669"/>
    <property type="project" value="UniProtKB-KW"/>
</dbReference>
<dbReference type="GO" id="GO:0019354">
    <property type="term" value="P:siroheme biosynthetic process"/>
    <property type="evidence" value="ECO:0007669"/>
    <property type="project" value="UniProtKB-UniRule"/>
</dbReference>
<dbReference type="CDD" id="cd11642">
    <property type="entry name" value="SUMT"/>
    <property type="match status" value="1"/>
</dbReference>
<dbReference type="FunFam" id="3.30.160.110:FF:000001">
    <property type="entry name" value="Siroheme synthase"/>
    <property type="match status" value="1"/>
</dbReference>
<dbReference type="FunFam" id="3.30.950.10:FF:000001">
    <property type="entry name" value="Siroheme synthase"/>
    <property type="match status" value="1"/>
</dbReference>
<dbReference type="FunFam" id="3.40.1010.10:FF:000001">
    <property type="entry name" value="Siroheme synthase"/>
    <property type="match status" value="1"/>
</dbReference>
<dbReference type="Gene3D" id="3.40.1010.10">
    <property type="entry name" value="Cobalt-precorrin-4 Transmethylase, Domain 1"/>
    <property type="match status" value="1"/>
</dbReference>
<dbReference type="Gene3D" id="3.30.950.10">
    <property type="entry name" value="Methyltransferase, Cobalt-precorrin-4 Transmethylase, Domain 2"/>
    <property type="match status" value="1"/>
</dbReference>
<dbReference type="Gene3D" id="3.40.50.720">
    <property type="entry name" value="NAD(P)-binding Rossmann-like Domain"/>
    <property type="match status" value="1"/>
</dbReference>
<dbReference type="Gene3D" id="1.10.8.210">
    <property type="entry name" value="Sirohaem synthase, dimerisation domain"/>
    <property type="match status" value="1"/>
</dbReference>
<dbReference type="Gene3D" id="3.30.160.110">
    <property type="entry name" value="Siroheme synthase, domain 2"/>
    <property type="match status" value="1"/>
</dbReference>
<dbReference type="HAMAP" id="MF_01646">
    <property type="entry name" value="Siroheme_synth"/>
    <property type="match status" value="1"/>
</dbReference>
<dbReference type="InterPro" id="IPR000878">
    <property type="entry name" value="4pyrrol_Mease"/>
</dbReference>
<dbReference type="InterPro" id="IPR035996">
    <property type="entry name" value="4pyrrol_Methylase_sf"/>
</dbReference>
<dbReference type="InterPro" id="IPR014777">
    <property type="entry name" value="4pyrrole_Mease_sub1"/>
</dbReference>
<dbReference type="InterPro" id="IPR014776">
    <property type="entry name" value="4pyrrole_Mease_sub2"/>
</dbReference>
<dbReference type="InterPro" id="IPR006366">
    <property type="entry name" value="CobA/CysG_C"/>
</dbReference>
<dbReference type="InterPro" id="IPR036291">
    <property type="entry name" value="NAD(P)-bd_dom_sf"/>
</dbReference>
<dbReference type="InterPro" id="IPR050161">
    <property type="entry name" value="Siro_Cobalamin_biosynth"/>
</dbReference>
<dbReference type="InterPro" id="IPR037115">
    <property type="entry name" value="Sirohaem_synt_dimer_dom_sf"/>
</dbReference>
<dbReference type="InterPro" id="IPR012409">
    <property type="entry name" value="Sirohaem_synth"/>
</dbReference>
<dbReference type="InterPro" id="IPR028281">
    <property type="entry name" value="Sirohaem_synthase_central"/>
</dbReference>
<dbReference type="InterPro" id="IPR019478">
    <property type="entry name" value="Sirohaem_synthase_dimer_dom"/>
</dbReference>
<dbReference type="InterPro" id="IPR006367">
    <property type="entry name" value="Sirohaem_synthase_N"/>
</dbReference>
<dbReference type="InterPro" id="IPR003043">
    <property type="entry name" value="Uropor_MeTrfase_CS"/>
</dbReference>
<dbReference type="NCBIfam" id="TIGR01469">
    <property type="entry name" value="cobA_cysG_Cterm"/>
    <property type="match status" value="1"/>
</dbReference>
<dbReference type="NCBIfam" id="TIGR01470">
    <property type="entry name" value="cysG_Nterm"/>
    <property type="match status" value="1"/>
</dbReference>
<dbReference type="NCBIfam" id="NF004790">
    <property type="entry name" value="PRK06136.1"/>
    <property type="match status" value="1"/>
</dbReference>
<dbReference type="NCBIfam" id="NF007922">
    <property type="entry name" value="PRK10637.1"/>
    <property type="match status" value="1"/>
</dbReference>
<dbReference type="PANTHER" id="PTHR45790:SF1">
    <property type="entry name" value="SIROHEME SYNTHASE"/>
    <property type="match status" value="1"/>
</dbReference>
<dbReference type="PANTHER" id="PTHR45790">
    <property type="entry name" value="SIROHEME SYNTHASE-RELATED"/>
    <property type="match status" value="1"/>
</dbReference>
<dbReference type="Pfam" id="PF10414">
    <property type="entry name" value="CysG_dimeriser"/>
    <property type="match status" value="1"/>
</dbReference>
<dbReference type="Pfam" id="PF13241">
    <property type="entry name" value="NAD_binding_7"/>
    <property type="match status" value="1"/>
</dbReference>
<dbReference type="Pfam" id="PF14824">
    <property type="entry name" value="Sirohm_synth_M"/>
    <property type="match status" value="1"/>
</dbReference>
<dbReference type="Pfam" id="PF00590">
    <property type="entry name" value="TP_methylase"/>
    <property type="match status" value="1"/>
</dbReference>
<dbReference type="PIRSF" id="PIRSF036426">
    <property type="entry name" value="Sirohaem_synth"/>
    <property type="match status" value="1"/>
</dbReference>
<dbReference type="SUPFAM" id="SSF51735">
    <property type="entry name" value="NAD(P)-binding Rossmann-fold domains"/>
    <property type="match status" value="1"/>
</dbReference>
<dbReference type="SUPFAM" id="SSF75615">
    <property type="entry name" value="Siroheme synthase middle domains-like"/>
    <property type="match status" value="1"/>
</dbReference>
<dbReference type="SUPFAM" id="SSF53790">
    <property type="entry name" value="Tetrapyrrole methylase"/>
    <property type="match status" value="1"/>
</dbReference>
<dbReference type="PROSITE" id="PS00840">
    <property type="entry name" value="SUMT_2"/>
    <property type="match status" value="1"/>
</dbReference>
<proteinExistence type="inferred from homology"/>